<sequence length="733" mass="83584">MIVIFIFILIAVGLLSTKILHRYISIKKIPWYVYISVWIGWFMCFSIVILVPIDILCTDYRQCKHISDSQSEKLNEIITNISNGTNSGSNNNNNNNNEIINKYDSCEEPWAYISNDKLEYIYQTFYFGTLLLTWLVYPLMGSFVLAGDFHLSGRITRSIKENAYLYLIFGVIGLVVMIWLLAVKQLDWNSMVGFAMAAANTWGLCLVIILMGYGLVETPRSIWVSSQRSLVLKHLQFKAVELLNSKKKANEELIATMKVIRRIQEKTKKYDPYEKYIKIIVDQCPPEQYALVQRGEGDGEATYSVLVALNSRLKNAITNSQRAEFLYDQCLVEAFELQDIQNSAISLDKNVNWSFREQRQGRFAKKLDIMEWIWYNYLEISVFRVAAIVFAVLSLLIIWSEFALAFTSFDISVLSNIVKHSNVSNIFVQFILFFPLGYEALTCYSTLFKIRIFNYYRLIPHQHSDSNSIIFSAAYLCRLGAPLCYNFIQFINMNSGIEDNRTSFSVVMGTMNVAPFLGTYFYIYFPLLIVIVCLSTLFNVYSRIMNCLNISKFRFDVDFSHEQIDEGKFLIDSERRKWTQNNIKPLSSKSPPPSLDSTSNNPKQIFKSGSTTISKQSPPNLNVSGGNINNNNTNNGNTSSARSFIDSFLKKSSNNNNNNNNNNNPYEQTLLFDESNDFDDDDDIESGGAGRPTYNAHLSSSFNGGANSTSISGYPQINKMFGGANRYSQLPKK</sequence>
<comment type="subcellular location">
    <subcellularLocation>
        <location evidence="3">Membrane</location>
        <topology evidence="3">Multi-pass membrane protein</topology>
    </subcellularLocation>
</comment>
<comment type="similarity">
    <text evidence="3">Belongs to the LIMR family.</text>
</comment>
<protein>
    <recommendedName>
        <fullName>LMBR1 domain-containing protein 2 homolog A</fullName>
    </recommendedName>
</protein>
<accession>Q54Q92</accession>
<name>LMD2A_DICDI</name>
<feature type="chain" id="PRO_0000339413" description="LMBR1 domain-containing protein 2 homolog A">
    <location>
        <begin position="1"/>
        <end position="733"/>
    </location>
</feature>
<feature type="transmembrane region" description="Helical" evidence="1">
    <location>
        <begin position="1"/>
        <end position="21"/>
    </location>
</feature>
<feature type="transmembrane region" description="Helical" evidence="1">
    <location>
        <begin position="33"/>
        <end position="53"/>
    </location>
</feature>
<feature type="transmembrane region" description="Helical" evidence="1">
    <location>
        <begin position="125"/>
        <end position="145"/>
    </location>
</feature>
<feature type="transmembrane region" description="Helical" evidence="1">
    <location>
        <begin position="163"/>
        <end position="183"/>
    </location>
</feature>
<feature type="transmembrane region" description="Helical" evidence="1">
    <location>
        <begin position="191"/>
        <end position="211"/>
    </location>
</feature>
<feature type="transmembrane region" description="Helical" evidence="1">
    <location>
        <begin position="386"/>
        <end position="406"/>
    </location>
</feature>
<feature type="transmembrane region" description="Helical" evidence="1">
    <location>
        <begin position="423"/>
        <end position="443"/>
    </location>
</feature>
<feature type="transmembrane region" description="Helical" evidence="1">
    <location>
        <begin position="468"/>
        <end position="488"/>
    </location>
</feature>
<feature type="transmembrane region" description="Helical" evidence="1">
    <location>
        <begin position="513"/>
        <end position="533"/>
    </location>
</feature>
<feature type="region of interest" description="Disordered" evidence="2">
    <location>
        <begin position="581"/>
        <end position="641"/>
    </location>
</feature>
<feature type="region of interest" description="Disordered" evidence="2">
    <location>
        <begin position="649"/>
        <end position="668"/>
    </location>
</feature>
<feature type="region of interest" description="Disordered" evidence="2">
    <location>
        <begin position="674"/>
        <end position="696"/>
    </location>
</feature>
<feature type="coiled-coil region" evidence="1">
    <location>
        <begin position="232"/>
        <end position="266"/>
    </location>
</feature>
<feature type="compositionally biased region" description="Polar residues" evidence="2">
    <location>
        <begin position="596"/>
        <end position="619"/>
    </location>
</feature>
<feature type="compositionally biased region" description="Low complexity" evidence="2">
    <location>
        <begin position="620"/>
        <end position="640"/>
    </location>
</feature>
<feature type="compositionally biased region" description="Low complexity" evidence="2">
    <location>
        <begin position="654"/>
        <end position="664"/>
    </location>
</feature>
<feature type="compositionally biased region" description="Acidic residues" evidence="2">
    <location>
        <begin position="674"/>
        <end position="685"/>
    </location>
</feature>
<keyword id="KW-0175">Coiled coil</keyword>
<keyword id="KW-0472">Membrane</keyword>
<keyword id="KW-1185">Reference proteome</keyword>
<keyword id="KW-0812">Transmembrane</keyword>
<keyword id="KW-1133">Transmembrane helix</keyword>
<gene>
    <name type="ORF">DDB_G0284019</name>
</gene>
<reference key="1">
    <citation type="journal article" date="2005" name="Nature">
        <title>The genome of the social amoeba Dictyostelium discoideum.</title>
        <authorList>
            <person name="Eichinger L."/>
            <person name="Pachebat J.A."/>
            <person name="Gloeckner G."/>
            <person name="Rajandream M.A."/>
            <person name="Sucgang R."/>
            <person name="Berriman M."/>
            <person name="Song J."/>
            <person name="Olsen R."/>
            <person name="Szafranski K."/>
            <person name="Xu Q."/>
            <person name="Tunggal B."/>
            <person name="Kummerfeld S."/>
            <person name="Madera M."/>
            <person name="Konfortov B.A."/>
            <person name="Rivero F."/>
            <person name="Bankier A.T."/>
            <person name="Lehmann R."/>
            <person name="Hamlin N."/>
            <person name="Davies R."/>
            <person name="Gaudet P."/>
            <person name="Fey P."/>
            <person name="Pilcher K."/>
            <person name="Chen G."/>
            <person name="Saunders D."/>
            <person name="Sodergren E.J."/>
            <person name="Davis P."/>
            <person name="Kerhornou A."/>
            <person name="Nie X."/>
            <person name="Hall N."/>
            <person name="Anjard C."/>
            <person name="Hemphill L."/>
            <person name="Bason N."/>
            <person name="Farbrother P."/>
            <person name="Desany B."/>
            <person name="Just E."/>
            <person name="Morio T."/>
            <person name="Rost R."/>
            <person name="Churcher C.M."/>
            <person name="Cooper J."/>
            <person name="Haydock S."/>
            <person name="van Driessche N."/>
            <person name="Cronin A."/>
            <person name="Goodhead I."/>
            <person name="Muzny D.M."/>
            <person name="Mourier T."/>
            <person name="Pain A."/>
            <person name="Lu M."/>
            <person name="Harper D."/>
            <person name="Lindsay R."/>
            <person name="Hauser H."/>
            <person name="James K.D."/>
            <person name="Quiles M."/>
            <person name="Madan Babu M."/>
            <person name="Saito T."/>
            <person name="Buchrieser C."/>
            <person name="Wardroper A."/>
            <person name="Felder M."/>
            <person name="Thangavelu M."/>
            <person name="Johnson D."/>
            <person name="Knights A."/>
            <person name="Loulseged H."/>
            <person name="Mungall K.L."/>
            <person name="Oliver K."/>
            <person name="Price C."/>
            <person name="Quail M.A."/>
            <person name="Urushihara H."/>
            <person name="Hernandez J."/>
            <person name="Rabbinowitsch E."/>
            <person name="Steffen D."/>
            <person name="Sanders M."/>
            <person name="Ma J."/>
            <person name="Kohara Y."/>
            <person name="Sharp S."/>
            <person name="Simmonds M.N."/>
            <person name="Spiegler S."/>
            <person name="Tivey A."/>
            <person name="Sugano S."/>
            <person name="White B."/>
            <person name="Walker D."/>
            <person name="Woodward J.R."/>
            <person name="Winckler T."/>
            <person name="Tanaka Y."/>
            <person name="Shaulsky G."/>
            <person name="Schleicher M."/>
            <person name="Weinstock G.M."/>
            <person name="Rosenthal A."/>
            <person name="Cox E.C."/>
            <person name="Chisholm R.L."/>
            <person name="Gibbs R.A."/>
            <person name="Loomis W.F."/>
            <person name="Platzer M."/>
            <person name="Kay R.R."/>
            <person name="Williams J.G."/>
            <person name="Dear P.H."/>
            <person name="Noegel A.A."/>
            <person name="Barrell B.G."/>
            <person name="Kuspa A."/>
        </authorList>
    </citation>
    <scope>NUCLEOTIDE SEQUENCE [LARGE SCALE GENOMIC DNA]</scope>
    <source>
        <strain>AX4</strain>
    </source>
</reference>
<evidence type="ECO:0000255" key="1"/>
<evidence type="ECO:0000256" key="2">
    <source>
        <dbReference type="SAM" id="MobiDB-lite"/>
    </source>
</evidence>
<evidence type="ECO:0000305" key="3"/>
<dbReference type="EMBL" id="AAFI02000059">
    <property type="protein sequence ID" value="EAL65433.1"/>
    <property type="molecule type" value="Genomic_DNA"/>
</dbReference>
<dbReference type="RefSeq" id="XP_638788.1">
    <property type="nucleotide sequence ID" value="XM_633696.1"/>
</dbReference>
<dbReference type="SMR" id="Q54Q92"/>
<dbReference type="FunCoup" id="Q54Q92">
    <property type="interactions" value="302"/>
</dbReference>
<dbReference type="PaxDb" id="44689-DDB0185797"/>
<dbReference type="EnsemblProtists" id="EAL65433">
    <property type="protein sequence ID" value="EAL65433"/>
    <property type="gene ID" value="DDB_G0284019"/>
</dbReference>
<dbReference type="GeneID" id="8624377"/>
<dbReference type="KEGG" id="ddi:DDB_G0284019"/>
<dbReference type="dictyBase" id="DDB_G0284019"/>
<dbReference type="VEuPathDB" id="AmoebaDB:DDB_G0284019"/>
<dbReference type="eggNOG" id="KOG2296">
    <property type="taxonomic scope" value="Eukaryota"/>
</dbReference>
<dbReference type="HOGENOM" id="CLU_014778_0_0_1"/>
<dbReference type="InParanoid" id="Q54Q92"/>
<dbReference type="OMA" id="IYNQCIH"/>
<dbReference type="PhylomeDB" id="Q54Q92"/>
<dbReference type="PRO" id="PR:Q54Q92"/>
<dbReference type="Proteomes" id="UP000002195">
    <property type="component" value="Chromosome 4"/>
</dbReference>
<dbReference type="GO" id="GO:0016020">
    <property type="term" value="C:membrane"/>
    <property type="evidence" value="ECO:0000318"/>
    <property type="project" value="GO_Central"/>
</dbReference>
<dbReference type="InterPro" id="IPR051584">
    <property type="entry name" value="GPCR-associated_LMBR1"/>
</dbReference>
<dbReference type="InterPro" id="IPR006876">
    <property type="entry name" value="LMBR1-like_membr_prot"/>
</dbReference>
<dbReference type="PANTHER" id="PTHR21355">
    <property type="entry name" value="G-PROTEIN COUPLED RECEPTOR-ASSOCIATED PROTEIN LMBRD2"/>
    <property type="match status" value="1"/>
</dbReference>
<dbReference type="PANTHER" id="PTHR21355:SF0">
    <property type="entry name" value="G-PROTEIN COUPLED RECEPTOR-ASSOCIATED PROTEIN LMBRD2"/>
    <property type="match status" value="1"/>
</dbReference>
<dbReference type="Pfam" id="PF04791">
    <property type="entry name" value="LMBR1"/>
    <property type="match status" value="1"/>
</dbReference>
<proteinExistence type="inferred from homology"/>
<organism>
    <name type="scientific">Dictyostelium discoideum</name>
    <name type="common">Social amoeba</name>
    <dbReference type="NCBI Taxonomy" id="44689"/>
    <lineage>
        <taxon>Eukaryota</taxon>
        <taxon>Amoebozoa</taxon>
        <taxon>Evosea</taxon>
        <taxon>Eumycetozoa</taxon>
        <taxon>Dictyostelia</taxon>
        <taxon>Dictyosteliales</taxon>
        <taxon>Dictyosteliaceae</taxon>
        <taxon>Dictyostelium</taxon>
    </lineage>
</organism>